<feature type="chain" id="PRO_1000026160" description="Aspartate 1-decarboxylase beta chain" evidence="1">
    <location>
        <begin position="1"/>
        <end position="24"/>
    </location>
</feature>
<feature type="chain" id="PRO_0000316052" description="Aspartate 1-decarboxylase alpha chain" evidence="1">
    <location>
        <begin position="25"/>
        <end position="128"/>
    </location>
</feature>
<feature type="active site" description="Schiff-base intermediate with substrate; via pyruvic acid" evidence="1">
    <location>
        <position position="25"/>
    </location>
</feature>
<feature type="active site" description="Proton donor" evidence="1">
    <location>
        <position position="58"/>
    </location>
</feature>
<feature type="binding site" evidence="1">
    <location>
        <position position="57"/>
    </location>
    <ligand>
        <name>substrate</name>
    </ligand>
</feature>
<feature type="binding site" evidence="1">
    <location>
        <begin position="73"/>
        <end position="75"/>
    </location>
    <ligand>
        <name>substrate</name>
    </ligand>
</feature>
<feature type="modified residue" description="Pyruvic acid (Ser)" evidence="1">
    <location>
        <position position="25"/>
    </location>
</feature>
<reference key="1">
    <citation type="journal article" date="2010" name="Genome Biol. Evol.">
        <title>Continuing evolution of Burkholderia mallei through genome reduction and large-scale rearrangements.</title>
        <authorList>
            <person name="Losada L."/>
            <person name="Ronning C.M."/>
            <person name="DeShazer D."/>
            <person name="Woods D."/>
            <person name="Fedorova N."/>
            <person name="Kim H.S."/>
            <person name="Shabalina S.A."/>
            <person name="Pearson T.R."/>
            <person name="Brinkac L."/>
            <person name="Tan P."/>
            <person name="Nandi T."/>
            <person name="Crabtree J."/>
            <person name="Badger J."/>
            <person name="Beckstrom-Sternberg S."/>
            <person name="Saqib M."/>
            <person name="Schutzer S.E."/>
            <person name="Keim P."/>
            <person name="Nierman W.C."/>
        </authorList>
    </citation>
    <scope>NUCLEOTIDE SEQUENCE [LARGE SCALE GENOMIC DNA]</scope>
    <source>
        <strain>NCTC 10247</strain>
    </source>
</reference>
<proteinExistence type="inferred from homology"/>
<protein>
    <recommendedName>
        <fullName evidence="1">Aspartate 1-decarboxylase</fullName>
        <ecNumber evidence="1">4.1.1.11</ecNumber>
    </recommendedName>
    <alternativeName>
        <fullName evidence="1">Aspartate alpha-decarboxylase</fullName>
    </alternativeName>
    <component>
        <recommendedName>
            <fullName evidence="1">Aspartate 1-decarboxylase beta chain</fullName>
        </recommendedName>
    </component>
    <component>
        <recommendedName>
            <fullName evidence="1">Aspartate 1-decarboxylase alpha chain</fullName>
        </recommendedName>
    </component>
</protein>
<comment type="function">
    <text evidence="1">Catalyzes the pyruvoyl-dependent decarboxylation of aspartate to produce beta-alanine.</text>
</comment>
<comment type="catalytic activity">
    <reaction evidence="1">
        <text>L-aspartate + H(+) = beta-alanine + CO2</text>
        <dbReference type="Rhea" id="RHEA:19497"/>
        <dbReference type="ChEBI" id="CHEBI:15378"/>
        <dbReference type="ChEBI" id="CHEBI:16526"/>
        <dbReference type="ChEBI" id="CHEBI:29991"/>
        <dbReference type="ChEBI" id="CHEBI:57966"/>
        <dbReference type="EC" id="4.1.1.11"/>
    </reaction>
</comment>
<comment type="cofactor">
    <cofactor evidence="1">
        <name>pyruvate</name>
        <dbReference type="ChEBI" id="CHEBI:15361"/>
    </cofactor>
    <text evidence="1">Binds 1 pyruvoyl group covalently per subunit.</text>
</comment>
<comment type="pathway">
    <text evidence="1">Cofactor biosynthesis; (R)-pantothenate biosynthesis; beta-alanine from L-aspartate: step 1/1.</text>
</comment>
<comment type="subunit">
    <text evidence="1">Heterooctamer of four alpha and four beta subunits.</text>
</comment>
<comment type="subcellular location">
    <subcellularLocation>
        <location evidence="1">Cytoplasm</location>
    </subcellularLocation>
</comment>
<comment type="PTM">
    <text evidence="1">Is synthesized initially as an inactive proenzyme, which is activated by self-cleavage at a specific serine bond to produce a beta-subunit with a hydroxyl group at its C-terminus and an alpha-subunit with a pyruvoyl group at its N-terminus.</text>
</comment>
<comment type="similarity">
    <text evidence="1">Belongs to the PanD family.</text>
</comment>
<keyword id="KW-0068">Autocatalytic cleavage</keyword>
<keyword id="KW-0963">Cytoplasm</keyword>
<keyword id="KW-0210">Decarboxylase</keyword>
<keyword id="KW-0456">Lyase</keyword>
<keyword id="KW-0566">Pantothenate biosynthesis</keyword>
<keyword id="KW-0670">Pyruvate</keyword>
<keyword id="KW-0704">Schiff base</keyword>
<keyword id="KW-0865">Zymogen</keyword>
<sequence>MQRHMLKSKIHRAAVTHCELHYEGSCAIDEDLLEAANIVENERIDIWNVNNGERFSTYAIKGERGSGMISLNGSAARRAQLGDLVIIAAFAMIDEQELKAGWKPDLVFVDEDNKIKGSRDHVPTQNWT</sequence>
<organism>
    <name type="scientific">Burkholderia mallei (strain NCTC 10247)</name>
    <dbReference type="NCBI Taxonomy" id="320389"/>
    <lineage>
        <taxon>Bacteria</taxon>
        <taxon>Pseudomonadati</taxon>
        <taxon>Pseudomonadota</taxon>
        <taxon>Betaproteobacteria</taxon>
        <taxon>Burkholderiales</taxon>
        <taxon>Burkholderiaceae</taxon>
        <taxon>Burkholderia</taxon>
        <taxon>pseudomallei group</taxon>
    </lineage>
</organism>
<name>PAND_BURM7</name>
<dbReference type="EC" id="4.1.1.11" evidence="1"/>
<dbReference type="EMBL" id="CP000548">
    <property type="protein sequence ID" value="ABO04485.1"/>
    <property type="molecule type" value="Genomic_DNA"/>
</dbReference>
<dbReference type="RefSeq" id="WP_004191357.1">
    <property type="nucleotide sequence ID" value="NZ_CP007802.1"/>
</dbReference>
<dbReference type="SMR" id="A3MLN3"/>
<dbReference type="GeneID" id="92978462"/>
<dbReference type="KEGG" id="bmaz:BM44_1549"/>
<dbReference type="KEGG" id="bmn:BMA10247_1625"/>
<dbReference type="PATRIC" id="fig|320389.8.peg.1730"/>
<dbReference type="UniPathway" id="UPA00028">
    <property type="reaction ID" value="UER00002"/>
</dbReference>
<dbReference type="GO" id="GO:0005829">
    <property type="term" value="C:cytosol"/>
    <property type="evidence" value="ECO:0007669"/>
    <property type="project" value="TreeGrafter"/>
</dbReference>
<dbReference type="GO" id="GO:0004068">
    <property type="term" value="F:aspartate 1-decarboxylase activity"/>
    <property type="evidence" value="ECO:0007669"/>
    <property type="project" value="UniProtKB-UniRule"/>
</dbReference>
<dbReference type="GO" id="GO:0006523">
    <property type="term" value="P:alanine biosynthetic process"/>
    <property type="evidence" value="ECO:0007669"/>
    <property type="project" value="InterPro"/>
</dbReference>
<dbReference type="GO" id="GO:0015940">
    <property type="term" value="P:pantothenate biosynthetic process"/>
    <property type="evidence" value="ECO:0007669"/>
    <property type="project" value="UniProtKB-UniRule"/>
</dbReference>
<dbReference type="CDD" id="cd06919">
    <property type="entry name" value="Asp_decarbox"/>
    <property type="match status" value="1"/>
</dbReference>
<dbReference type="Gene3D" id="2.40.40.20">
    <property type="match status" value="1"/>
</dbReference>
<dbReference type="HAMAP" id="MF_00446">
    <property type="entry name" value="PanD"/>
    <property type="match status" value="1"/>
</dbReference>
<dbReference type="InterPro" id="IPR009010">
    <property type="entry name" value="Asp_de-COase-like_dom_sf"/>
</dbReference>
<dbReference type="InterPro" id="IPR003190">
    <property type="entry name" value="Asp_decarbox"/>
</dbReference>
<dbReference type="NCBIfam" id="TIGR00223">
    <property type="entry name" value="panD"/>
    <property type="match status" value="1"/>
</dbReference>
<dbReference type="PANTHER" id="PTHR21012">
    <property type="entry name" value="ASPARTATE 1-DECARBOXYLASE"/>
    <property type="match status" value="1"/>
</dbReference>
<dbReference type="PANTHER" id="PTHR21012:SF0">
    <property type="entry name" value="ASPARTATE 1-DECARBOXYLASE"/>
    <property type="match status" value="1"/>
</dbReference>
<dbReference type="Pfam" id="PF02261">
    <property type="entry name" value="Asp_decarbox"/>
    <property type="match status" value="1"/>
</dbReference>
<dbReference type="PIRSF" id="PIRSF006246">
    <property type="entry name" value="Asp_decarbox"/>
    <property type="match status" value="1"/>
</dbReference>
<dbReference type="SUPFAM" id="SSF50692">
    <property type="entry name" value="ADC-like"/>
    <property type="match status" value="1"/>
</dbReference>
<evidence type="ECO:0000255" key="1">
    <source>
        <dbReference type="HAMAP-Rule" id="MF_00446"/>
    </source>
</evidence>
<gene>
    <name evidence="1" type="primary">panD</name>
    <name type="ordered locus">BMA10247_1625</name>
</gene>
<accession>A3MLN3</accession>